<feature type="chain" id="PRO_0000122177" description="Type-2 serine--tRNA ligase">
    <location>
        <begin position="1"/>
        <end position="513"/>
    </location>
</feature>
<feature type="binding site" evidence="1">
    <location>
        <position position="312"/>
    </location>
    <ligand>
        <name>L-serine</name>
        <dbReference type="ChEBI" id="CHEBI:33384"/>
    </ligand>
</feature>
<feature type="binding site" evidence="1">
    <location>
        <position position="314"/>
    </location>
    <ligand>
        <name>Zn(2+)</name>
        <dbReference type="ChEBI" id="CHEBI:29105"/>
        <note>catalytic</note>
    </ligand>
</feature>
<feature type="binding site" evidence="1">
    <location>
        <begin position="344"/>
        <end position="346"/>
    </location>
    <ligand>
        <name>ATP</name>
        <dbReference type="ChEBI" id="CHEBI:30616"/>
    </ligand>
</feature>
<feature type="binding site" evidence="1">
    <location>
        <position position="344"/>
    </location>
    <ligand>
        <name>L-serine</name>
        <dbReference type="ChEBI" id="CHEBI:33384"/>
    </ligand>
</feature>
<feature type="binding site" evidence="1">
    <location>
        <begin position="355"/>
        <end position="356"/>
    </location>
    <ligand>
        <name>ATP</name>
        <dbReference type="ChEBI" id="CHEBI:30616"/>
    </ligand>
</feature>
<feature type="binding site" evidence="1">
    <location>
        <begin position="361"/>
        <end position="363"/>
    </location>
    <ligand>
        <name>L-serine</name>
        <dbReference type="ChEBI" id="CHEBI:33384"/>
    </ligand>
</feature>
<feature type="binding site" evidence="1">
    <location>
        <position position="363"/>
    </location>
    <ligand>
        <name>Zn(2+)</name>
        <dbReference type="ChEBI" id="CHEBI:29105"/>
        <note>catalytic</note>
    </ligand>
</feature>
<feature type="binding site" evidence="1">
    <location>
        <position position="467"/>
    </location>
    <ligand>
        <name>Zn(2+)</name>
        <dbReference type="ChEBI" id="CHEBI:29105"/>
        <note>catalytic</note>
    </ligand>
</feature>
<feature type="binding site" evidence="1">
    <location>
        <position position="474"/>
    </location>
    <ligand>
        <name>ATP</name>
        <dbReference type="ChEBI" id="CHEBI:30616"/>
    </ligand>
</feature>
<feature type="sequence conflict" description="In Ref. 2; AAB87409." evidence="3" ref="2">
    <original>F</original>
    <variation>V</variation>
    <location>
        <position position="150"/>
    </location>
</feature>
<feature type="sequence conflict" description="In Ref. 2; AAB87409." evidence="3" ref="2">
    <original>D</original>
    <variation>E</variation>
    <location>
        <position position="187"/>
    </location>
</feature>
<feature type="sequence conflict" description="In Ref. 2; AAB87409." evidence="3" ref="2">
    <original>F</original>
    <variation>L</variation>
    <location>
        <position position="230"/>
    </location>
</feature>
<feature type="sequence conflict" description="In Ref. 2; AAB87409." evidence="3" ref="2">
    <original>E</original>
    <variation>R</variation>
    <location>
        <position position="242"/>
    </location>
</feature>
<feature type="sequence conflict" description="In Ref. 2; AAB87409." evidence="3" ref="2">
    <original>E</original>
    <variation>D</variation>
    <location>
        <position position="358"/>
    </location>
</feature>
<feature type="sequence conflict" description="In Ref. 2; AAB87409." evidence="3" ref="2">
    <original>V</original>
    <variation>VV</variation>
    <location>
        <position position="501"/>
    </location>
</feature>
<feature type="sequence conflict" description="In Ref. 2; AAB87409." evidence="3" ref="2">
    <original>NP</original>
    <variation>KG</variation>
    <location>
        <begin position="503"/>
        <end position="504"/>
    </location>
</feature>
<feature type="sequence conflict" description="In Ref. 2; AAB87409." evidence="3" ref="2">
    <original>D</original>
    <variation>T</variation>
    <location>
        <position position="513"/>
    </location>
</feature>
<evidence type="ECO:0000250" key="1"/>
<evidence type="ECO:0000269" key="2">
    <source>
    </source>
</evidence>
<evidence type="ECO:0000305" key="3"/>
<keyword id="KW-0030">Aminoacyl-tRNA synthetase</keyword>
<keyword id="KW-0067">ATP-binding</keyword>
<keyword id="KW-0963">Cytoplasm</keyword>
<keyword id="KW-0903">Direct protein sequencing</keyword>
<keyword id="KW-0436">Ligase</keyword>
<keyword id="KW-0479">Metal-binding</keyword>
<keyword id="KW-0547">Nucleotide-binding</keyword>
<keyword id="KW-0648">Protein biosynthesis</keyword>
<keyword id="KW-1185">Reference proteome</keyword>
<keyword id="KW-0862">Zinc</keyword>
<protein>
    <recommendedName>
        <fullName>Type-2 serine--tRNA ligase</fullName>
        <ecNumber>6.1.1.11</ecNumber>
    </recommendedName>
    <alternativeName>
        <fullName>Seryl-tRNA synthetase</fullName>
        <shortName>SerRS</shortName>
    </alternativeName>
    <alternativeName>
        <fullName>Seryl-tRNA(Ser/Sec) synthetase</fullName>
    </alternativeName>
</protein>
<sequence>MKFKLKGIIKLSKEVPGIEDDLEKFFTEAESDILRRGVPEGQEHEAAHIKSWRLEGDTLHIEMESGRRVRAHDGLLRLKKPLGQLLGPKYRVGVRGISVTDYTMEMKAPGVSGIPSLAELPFVEDAAITDGTIMVRFQPLEESDLRKHVFDRVVKHARTLVESSDDLTVQVTRATPGEIIARSRSRDFFFEGDPTEEAMRLGWVKKFPGRGQWFYGPKITALHRALEEFFIERIVKPLGFVECLFPKLIPLDIMNKMRYLEGLPEGMYYCSAPSRDPETFEEFKNELIINREVPMDLLKRGIKDPGYVIAPAQCEPFYQFLSHEVVSAEDLPVKFFDRSGWTYRWEAGGSKGLDRVHEFQRVELVWLAEPGETEEIRDRTVELSHDAADELELEWYTEVGDDPFYLEGRKVEERGIEFPDVPKYEMRLSLPGREKGVAVVSANVHGTHFIEGFSIREARNLNIWTGCTGIGLSRWIYGFLAQKGFETGNWPDFIGERVEGVENPRIITWPRQD</sequence>
<organism>
    <name type="scientific">Methanothermobacter thermautotrophicus (strain ATCC 29096 / DSM 1053 / JCM 10044 / NBRC 100330 / Delta H)</name>
    <name type="common">Methanobacterium thermoautotrophicum</name>
    <dbReference type="NCBI Taxonomy" id="187420"/>
    <lineage>
        <taxon>Archaea</taxon>
        <taxon>Methanobacteriati</taxon>
        <taxon>Methanobacteriota</taxon>
        <taxon>Methanomada group</taxon>
        <taxon>Methanobacteria</taxon>
        <taxon>Methanobacteriales</taxon>
        <taxon>Methanobacteriaceae</taxon>
        <taxon>Methanothermobacter</taxon>
    </lineage>
</organism>
<dbReference type="EC" id="6.1.1.11"/>
<dbReference type="EMBL" id="AF009823">
    <property type="protein sequence ID" value="AAB87409.1"/>
    <property type="molecule type" value="Genomic_DNA"/>
</dbReference>
<dbReference type="EMBL" id="AE000666">
    <property type="protein sequence ID" value="AAB85611.1"/>
    <property type="molecule type" value="Genomic_DNA"/>
</dbReference>
<dbReference type="PIR" id="D69016">
    <property type="entry name" value="D69016"/>
</dbReference>
<dbReference type="RefSeq" id="WP_010876746.1">
    <property type="nucleotide sequence ID" value="NC_000916.1"/>
</dbReference>
<dbReference type="SMR" id="O27194"/>
<dbReference type="FunCoup" id="O27194">
    <property type="interactions" value="25"/>
</dbReference>
<dbReference type="STRING" id="187420.MTH_1122"/>
<dbReference type="PaxDb" id="187420-MTH_1122"/>
<dbReference type="EnsemblBacteria" id="AAB85611">
    <property type="protein sequence ID" value="AAB85611"/>
    <property type="gene ID" value="MTH_1122"/>
</dbReference>
<dbReference type="GeneID" id="1471530"/>
<dbReference type="KEGG" id="mth:MTH_1122"/>
<dbReference type="PATRIC" id="fig|187420.15.peg.1099"/>
<dbReference type="HOGENOM" id="CLU_542524_0_0_2"/>
<dbReference type="InParanoid" id="O27194"/>
<dbReference type="UniPathway" id="UPA00906">
    <property type="reaction ID" value="UER00895"/>
</dbReference>
<dbReference type="Proteomes" id="UP000005223">
    <property type="component" value="Chromosome"/>
</dbReference>
<dbReference type="GO" id="GO:0005737">
    <property type="term" value="C:cytoplasm"/>
    <property type="evidence" value="ECO:0007669"/>
    <property type="project" value="UniProtKB-SubCell"/>
</dbReference>
<dbReference type="GO" id="GO:0005524">
    <property type="term" value="F:ATP binding"/>
    <property type="evidence" value="ECO:0007669"/>
    <property type="project" value="UniProtKB-UniRule"/>
</dbReference>
<dbReference type="GO" id="GO:0004828">
    <property type="term" value="F:serine-tRNA ligase activity"/>
    <property type="evidence" value="ECO:0007669"/>
    <property type="project" value="UniProtKB-UniRule"/>
</dbReference>
<dbReference type="GO" id="GO:0008270">
    <property type="term" value="F:zinc ion binding"/>
    <property type="evidence" value="ECO:0007669"/>
    <property type="project" value="UniProtKB-UniRule"/>
</dbReference>
<dbReference type="GO" id="GO:0016260">
    <property type="term" value="P:selenocysteine biosynthetic process"/>
    <property type="evidence" value="ECO:0007669"/>
    <property type="project" value="UniProtKB-UniRule"/>
</dbReference>
<dbReference type="GO" id="GO:0006434">
    <property type="term" value="P:seryl-tRNA aminoacylation"/>
    <property type="evidence" value="ECO:0007669"/>
    <property type="project" value="UniProtKB-UniRule"/>
</dbReference>
<dbReference type="CDD" id="cd00670">
    <property type="entry name" value="Gly_His_Pro_Ser_Thr_tRS_core"/>
    <property type="match status" value="1"/>
</dbReference>
<dbReference type="Gene3D" id="3.30.70.1920">
    <property type="match status" value="1"/>
</dbReference>
<dbReference type="Gene3D" id="3.30.930.10">
    <property type="entry name" value="Bira Bifunctional Protein, Domain 2"/>
    <property type="match status" value="1"/>
</dbReference>
<dbReference type="HAMAP" id="MF_01278">
    <property type="entry name" value="Ser_tRNA_synth_type2"/>
    <property type="match status" value="1"/>
</dbReference>
<dbReference type="InterPro" id="IPR002314">
    <property type="entry name" value="aa-tRNA-synt_IIb"/>
</dbReference>
<dbReference type="InterPro" id="IPR045864">
    <property type="entry name" value="aa-tRNA-synth_II/BPL/LPL"/>
</dbReference>
<dbReference type="InterPro" id="IPR004503">
    <property type="entry name" value="Ser-tRNA-ligase_2_arc"/>
</dbReference>
<dbReference type="InterPro" id="IPR041293">
    <property type="entry name" value="SerS_tRNA-bd"/>
</dbReference>
<dbReference type="NCBIfam" id="NF002120">
    <property type="entry name" value="PRK00960.1"/>
    <property type="match status" value="1"/>
</dbReference>
<dbReference type="NCBIfam" id="TIGR00415">
    <property type="entry name" value="serS_MJ"/>
    <property type="match status" value="1"/>
</dbReference>
<dbReference type="Pfam" id="PF00587">
    <property type="entry name" value="tRNA-synt_2b"/>
    <property type="match status" value="1"/>
</dbReference>
<dbReference type="Pfam" id="PF18490">
    <property type="entry name" value="tRNA_bind_4"/>
    <property type="match status" value="1"/>
</dbReference>
<dbReference type="SUPFAM" id="SSF55681">
    <property type="entry name" value="Class II aaRS and biotin synthetases"/>
    <property type="match status" value="1"/>
</dbReference>
<accession>O27194</accession>
<accession>O30521</accession>
<comment type="function">
    <text evidence="2">Catalyzes the attachment of serine to tRNA(Ser). Is also able to aminoacylate tRNA(Sec) with serine, to form the misacylated tRNA L-seryl-tRNA(Sec), which will be further converted into selenocysteinyl-tRNA(Sec).</text>
</comment>
<comment type="catalytic activity">
    <reaction>
        <text>tRNA(Ser) + L-serine + ATP = L-seryl-tRNA(Ser) + AMP + diphosphate + H(+)</text>
        <dbReference type="Rhea" id="RHEA:12292"/>
        <dbReference type="Rhea" id="RHEA-COMP:9669"/>
        <dbReference type="Rhea" id="RHEA-COMP:9703"/>
        <dbReference type="ChEBI" id="CHEBI:15378"/>
        <dbReference type="ChEBI" id="CHEBI:30616"/>
        <dbReference type="ChEBI" id="CHEBI:33019"/>
        <dbReference type="ChEBI" id="CHEBI:33384"/>
        <dbReference type="ChEBI" id="CHEBI:78442"/>
        <dbReference type="ChEBI" id="CHEBI:78533"/>
        <dbReference type="ChEBI" id="CHEBI:456215"/>
        <dbReference type="EC" id="6.1.1.11"/>
    </reaction>
</comment>
<comment type="catalytic activity">
    <reaction>
        <text>tRNA(Sec) + L-serine + ATP = L-seryl-tRNA(Sec) + AMP + diphosphate + H(+)</text>
        <dbReference type="Rhea" id="RHEA:42580"/>
        <dbReference type="Rhea" id="RHEA-COMP:9742"/>
        <dbReference type="Rhea" id="RHEA-COMP:10128"/>
        <dbReference type="ChEBI" id="CHEBI:15378"/>
        <dbReference type="ChEBI" id="CHEBI:30616"/>
        <dbReference type="ChEBI" id="CHEBI:33019"/>
        <dbReference type="ChEBI" id="CHEBI:33384"/>
        <dbReference type="ChEBI" id="CHEBI:78442"/>
        <dbReference type="ChEBI" id="CHEBI:78533"/>
        <dbReference type="ChEBI" id="CHEBI:456215"/>
        <dbReference type="EC" id="6.1.1.11"/>
    </reaction>
</comment>
<comment type="cofactor">
    <cofactor evidence="1">
        <name>Zn(2+)</name>
        <dbReference type="ChEBI" id="CHEBI:29105"/>
    </cofactor>
    <text evidence="1">Binds 1 Zn(2+) ion per subunit. This ion is coordinated with 2 cysteines, 1 glutamate and a water molecule that dissociates from the zinc ion to allow the coordination of the amino group of the serine substrate, which is essential for catalysis.</text>
</comment>
<comment type="pathway">
    <text>Aminoacyl-tRNA biosynthesis; selenocysteinyl-tRNA(Sec) biosynthesis; L-seryl-tRNA(Sec) from L-serine and tRNA(Sec): step 1/1.</text>
</comment>
<comment type="subunit">
    <text evidence="1">Homodimer.</text>
</comment>
<comment type="subcellular location">
    <subcellularLocation>
        <location evidence="1">Cytoplasm</location>
    </subcellularLocation>
</comment>
<comment type="domain">
    <text evidence="1">Consists of two distinct domains, a catalytic core and a N-terminal extension that is presumably involved in tRNA binding.</text>
</comment>
<comment type="similarity">
    <text evidence="3">Belongs to the class-II aminoacyl-tRNA synthetase family. Type-2 seryl-tRNA synthetase subfamily.</text>
</comment>
<gene>
    <name type="primary">serS</name>
    <name type="ordered locus">MTH_1122</name>
</gene>
<proteinExistence type="evidence at protein level"/>
<reference key="1">
    <citation type="journal article" date="1998" name="J. Bacteriol.">
        <title>Sequence divergence of seryl-tRNA synthetases in archaea.</title>
        <authorList>
            <person name="Kim H.-S."/>
            <person name="Vothknecht U.C."/>
            <person name="Hedderich R."/>
            <person name="Celic I."/>
            <person name="Soell D."/>
        </authorList>
    </citation>
    <scope>NUCLEOTIDE SEQUENCE [GENOMIC DNA]</scope>
    <scope>PROTEIN SEQUENCE OF 1-13</scope>
    <scope>FUNCTION</scope>
    <source>
        <strain>ATCC 29096 / DSM 1053 / JCM 10044 / NBRC 100330 / Delta H</strain>
    </source>
</reference>
<reference key="2">
    <citation type="journal article" date="1997" name="J. Bacteriol.">
        <title>Complete genome sequence of Methanobacterium thermoautotrophicum deltaH: functional analysis and comparative genomics.</title>
        <authorList>
            <person name="Smith D.R."/>
            <person name="Doucette-Stamm L.A."/>
            <person name="Deloughery C."/>
            <person name="Lee H.-M."/>
            <person name="Dubois J."/>
            <person name="Aldredge T."/>
            <person name="Bashirzadeh R."/>
            <person name="Blakely D."/>
            <person name="Cook R."/>
            <person name="Gilbert K."/>
            <person name="Harrison D."/>
            <person name="Hoang L."/>
            <person name="Keagle P."/>
            <person name="Lumm W."/>
            <person name="Pothier B."/>
            <person name="Qiu D."/>
            <person name="Spadafora R."/>
            <person name="Vicare R."/>
            <person name="Wang Y."/>
            <person name="Wierzbowski J."/>
            <person name="Gibson R."/>
            <person name="Jiwani N."/>
            <person name="Caruso A."/>
            <person name="Bush D."/>
            <person name="Safer H."/>
            <person name="Patwell D."/>
            <person name="Prabhakar S."/>
            <person name="McDougall S."/>
            <person name="Shimer G."/>
            <person name="Goyal A."/>
            <person name="Pietrovski S."/>
            <person name="Church G.M."/>
            <person name="Daniels C.J."/>
            <person name="Mao J.-I."/>
            <person name="Rice P."/>
            <person name="Noelling J."/>
            <person name="Reeve J.N."/>
        </authorList>
    </citation>
    <scope>NUCLEOTIDE SEQUENCE [LARGE SCALE GENOMIC DNA]</scope>
    <source>
        <strain>ATCC 29096 / DSM 1053 / JCM 10044 / NBRC 100330 / Delta H</strain>
    </source>
</reference>
<name>SYS2_METTH</name>